<reference key="1">
    <citation type="submission" date="2007-06" db="EMBL/GenBank/DDBJ databases">
        <authorList>
            <person name="Brinkac L.M."/>
            <person name="Daugherty S."/>
            <person name="Dodson R.J."/>
            <person name="Madupu R."/>
            <person name="Brown J.L."/>
            <person name="Bruce D."/>
            <person name="Detter C."/>
            <person name="Munk C."/>
            <person name="Smith L.A."/>
            <person name="Smith T.J."/>
            <person name="White O."/>
            <person name="Brettin T.S."/>
        </authorList>
    </citation>
    <scope>NUCLEOTIDE SEQUENCE [LARGE SCALE GENOMIC DNA]</scope>
    <source>
        <strain>Langeland / NCTC 10281 / Type F</strain>
    </source>
</reference>
<comment type="catalytic activity">
    <reaction evidence="1">
        <text>(2R)-3-phosphoglycerate + ATP = (2R)-3-phospho-glyceroyl phosphate + ADP</text>
        <dbReference type="Rhea" id="RHEA:14801"/>
        <dbReference type="ChEBI" id="CHEBI:30616"/>
        <dbReference type="ChEBI" id="CHEBI:57604"/>
        <dbReference type="ChEBI" id="CHEBI:58272"/>
        <dbReference type="ChEBI" id="CHEBI:456216"/>
        <dbReference type="EC" id="2.7.2.3"/>
    </reaction>
</comment>
<comment type="pathway">
    <text evidence="1">Carbohydrate degradation; glycolysis; pyruvate from D-glyceraldehyde 3-phosphate: step 2/5.</text>
</comment>
<comment type="subunit">
    <text evidence="1">Monomer.</text>
</comment>
<comment type="subcellular location">
    <subcellularLocation>
        <location evidence="1">Cytoplasm</location>
    </subcellularLocation>
</comment>
<comment type="similarity">
    <text evidence="1">Belongs to the phosphoglycerate kinase family.</text>
</comment>
<accession>A7G9Y0</accession>
<keyword id="KW-0067">ATP-binding</keyword>
<keyword id="KW-0963">Cytoplasm</keyword>
<keyword id="KW-0324">Glycolysis</keyword>
<keyword id="KW-0418">Kinase</keyword>
<keyword id="KW-0547">Nucleotide-binding</keyword>
<keyword id="KW-0808">Transferase</keyword>
<dbReference type="EC" id="2.7.2.3" evidence="1"/>
<dbReference type="EMBL" id="CP000728">
    <property type="protein sequence ID" value="ABS42835.1"/>
    <property type="molecule type" value="Genomic_DNA"/>
</dbReference>
<dbReference type="RefSeq" id="WP_011987290.1">
    <property type="nucleotide sequence ID" value="NC_009699.1"/>
</dbReference>
<dbReference type="SMR" id="A7G9Y0"/>
<dbReference type="KEGG" id="cbf:CLI_0292"/>
<dbReference type="HOGENOM" id="CLU_025427_0_2_9"/>
<dbReference type="UniPathway" id="UPA00109">
    <property type="reaction ID" value="UER00185"/>
</dbReference>
<dbReference type="Proteomes" id="UP000002410">
    <property type="component" value="Chromosome"/>
</dbReference>
<dbReference type="GO" id="GO:0005829">
    <property type="term" value="C:cytosol"/>
    <property type="evidence" value="ECO:0007669"/>
    <property type="project" value="TreeGrafter"/>
</dbReference>
<dbReference type="GO" id="GO:0043531">
    <property type="term" value="F:ADP binding"/>
    <property type="evidence" value="ECO:0007669"/>
    <property type="project" value="TreeGrafter"/>
</dbReference>
<dbReference type="GO" id="GO:0005524">
    <property type="term" value="F:ATP binding"/>
    <property type="evidence" value="ECO:0007669"/>
    <property type="project" value="UniProtKB-KW"/>
</dbReference>
<dbReference type="GO" id="GO:0004618">
    <property type="term" value="F:phosphoglycerate kinase activity"/>
    <property type="evidence" value="ECO:0007669"/>
    <property type="project" value="UniProtKB-UniRule"/>
</dbReference>
<dbReference type="GO" id="GO:0006094">
    <property type="term" value="P:gluconeogenesis"/>
    <property type="evidence" value="ECO:0007669"/>
    <property type="project" value="TreeGrafter"/>
</dbReference>
<dbReference type="GO" id="GO:0006096">
    <property type="term" value="P:glycolytic process"/>
    <property type="evidence" value="ECO:0007669"/>
    <property type="project" value="UniProtKB-UniRule"/>
</dbReference>
<dbReference type="CDD" id="cd00318">
    <property type="entry name" value="Phosphoglycerate_kinase"/>
    <property type="match status" value="1"/>
</dbReference>
<dbReference type="FunFam" id="3.40.50.1260:FF:000007">
    <property type="entry name" value="Phosphoglycerate kinase"/>
    <property type="match status" value="1"/>
</dbReference>
<dbReference type="FunFam" id="3.40.50.1260:FF:000008">
    <property type="entry name" value="Phosphoglycerate kinase"/>
    <property type="match status" value="1"/>
</dbReference>
<dbReference type="Gene3D" id="3.40.50.1260">
    <property type="entry name" value="Phosphoglycerate kinase, N-terminal domain"/>
    <property type="match status" value="2"/>
</dbReference>
<dbReference type="HAMAP" id="MF_00145">
    <property type="entry name" value="Phosphoglyc_kinase"/>
    <property type="match status" value="1"/>
</dbReference>
<dbReference type="InterPro" id="IPR001576">
    <property type="entry name" value="Phosphoglycerate_kinase"/>
</dbReference>
<dbReference type="InterPro" id="IPR015911">
    <property type="entry name" value="Phosphoglycerate_kinase_CS"/>
</dbReference>
<dbReference type="InterPro" id="IPR015824">
    <property type="entry name" value="Phosphoglycerate_kinase_N"/>
</dbReference>
<dbReference type="InterPro" id="IPR036043">
    <property type="entry name" value="Phosphoglycerate_kinase_sf"/>
</dbReference>
<dbReference type="PANTHER" id="PTHR11406">
    <property type="entry name" value="PHOSPHOGLYCERATE KINASE"/>
    <property type="match status" value="1"/>
</dbReference>
<dbReference type="PANTHER" id="PTHR11406:SF23">
    <property type="entry name" value="PHOSPHOGLYCERATE KINASE 1, CHLOROPLASTIC-RELATED"/>
    <property type="match status" value="1"/>
</dbReference>
<dbReference type="Pfam" id="PF00162">
    <property type="entry name" value="PGK"/>
    <property type="match status" value="1"/>
</dbReference>
<dbReference type="PIRSF" id="PIRSF000724">
    <property type="entry name" value="Pgk"/>
    <property type="match status" value="1"/>
</dbReference>
<dbReference type="PRINTS" id="PR00477">
    <property type="entry name" value="PHGLYCKINASE"/>
</dbReference>
<dbReference type="SUPFAM" id="SSF53748">
    <property type="entry name" value="Phosphoglycerate kinase"/>
    <property type="match status" value="1"/>
</dbReference>
<dbReference type="PROSITE" id="PS00111">
    <property type="entry name" value="PGLYCERATE_KINASE"/>
    <property type="match status" value="1"/>
</dbReference>
<sequence length="398" mass="42976">MNYNKKSIEDIDVKGKKVLVRCDFNVPLNEGKITDENRLVGALPTIKYLMGKGAKIILCSHMGKPKGEPKKELSLLPVAKRLSEMLNKEVIFADDDNVVGENAKKAVEDMKDGDVVLLQNTRYRKEETKNEEVFSKELASLADVFVNDAFGTAHRAHCSTVGVTNYLKEAACGYLIQKELKFLGNAVEKPERPFVAILGGAKVSDKINVINNLLDKVDTLIIGGGMGYTFLKAQGYTIGNSLVEEDKVEYSKEMIDKAKEKGVNLLLPIDNVVADKFDKDASPVVTEDQNIGEGYMGLDIGPKTAKIYSDAIKSAKTVVWNGPMGVFEFKSFANGTIEVAKAMADSDAVTIIGGGDSAAAVNILGFGDKMTHISTGGGASLEFLEGKELPGIAALNDK</sequence>
<proteinExistence type="inferred from homology"/>
<gene>
    <name evidence="1" type="primary">pgk</name>
    <name type="ordered locus">CLI_0292</name>
</gene>
<protein>
    <recommendedName>
        <fullName evidence="1">Phosphoglycerate kinase</fullName>
        <ecNumber evidence="1">2.7.2.3</ecNumber>
    </recommendedName>
</protein>
<feature type="chain" id="PRO_1000009608" description="Phosphoglycerate kinase">
    <location>
        <begin position="1"/>
        <end position="398"/>
    </location>
</feature>
<feature type="binding site" evidence="1">
    <location>
        <begin position="23"/>
        <end position="25"/>
    </location>
    <ligand>
        <name>substrate</name>
    </ligand>
</feature>
<feature type="binding site" evidence="1">
    <location>
        <position position="38"/>
    </location>
    <ligand>
        <name>substrate</name>
    </ligand>
</feature>
<feature type="binding site" evidence="1">
    <location>
        <begin position="61"/>
        <end position="64"/>
    </location>
    <ligand>
        <name>substrate</name>
    </ligand>
</feature>
<feature type="binding site" evidence="1">
    <location>
        <position position="122"/>
    </location>
    <ligand>
        <name>substrate</name>
    </ligand>
</feature>
<feature type="binding site" evidence="1">
    <location>
        <position position="155"/>
    </location>
    <ligand>
        <name>substrate</name>
    </ligand>
</feature>
<feature type="binding site" evidence="1">
    <location>
        <position position="206"/>
    </location>
    <ligand>
        <name>ATP</name>
        <dbReference type="ChEBI" id="CHEBI:30616"/>
    </ligand>
</feature>
<feature type="binding site" evidence="1">
    <location>
        <position position="297"/>
    </location>
    <ligand>
        <name>ATP</name>
        <dbReference type="ChEBI" id="CHEBI:30616"/>
    </ligand>
</feature>
<feature type="binding site" evidence="1">
    <location>
        <position position="328"/>
    </location>
    <ligand>
        <name>ATP</name>
        <dbReference type="ChEBI" id="CHEBI:30616"/>
    </ligand>
</feature>
<feature type="binding site" evidence="1">
    <location>
        <begin position="354"/>
        <end position="357"/>
    </location>
    <ligand>
        <name>ATP</name>
        <dbReference type="ChEBI" id="CHEBI:30616"/>
    </ligand>
</feature>
<evidence type="ECO:0000255" key="1">
    <source>
        <dbReference type="HAMAP-Rule" id="MF_00145"/>
    </source>
</evidence>
<name>PGK_CLOBL</name>
<organism>
    <name type="scientific">Clostridium botulinum (strain Langeland / NCTC 10281 / Type F)</name>
    <dbReference type="NCBI Taxonomy" id="441772"/>
    <lineage>
        <taxon>Bacteria</taxon>
        <taxon>Bacillati</taxon>
        <taxon>Bacillota</taxon>
        <taxon>Clostridia</taxon>
        <taxon>Eubacteriales</taxon>
        <taxon>Clostridiaceae</taxon>
        <taxon>Clostridium</taxon>
    </lineage>
</organism>